<sequence length="239" mass="26180">MSKQVAHSFSSEDFSFIKQKLAREAVALVEPGMRVGLGSGSTAREFILALGERVRNERLAITAVASSRISHLLAQALGIPFLDPALSQELDLVVDGADEVDANLRMIKGGGGALFREKILLQSGKRNIILVDERKLVSVLGTFPLPIEISPFGCSSVEKVLNQQGYIGDWRKTSHGERFITDNGNYIYDVSSPDSYPHPEEDLIRLLQIRGIIDVGFVIAKAEVWVGYADGTVVRKEIT</sequence>
<organism>
    <name type="scientific">Chlamydia muridarum (strain MoPn / Nigg)</name>
    <dbReference type="NCBI Taxonomy" id="243161"/>
    <lineage>
        <taxon>Bacteria</taxon>
        <taxon>Pseudomonadati</taxon>
        <taxon>Chlamydiota</taxon>
        <taxon>Chlamydiia</taxon>
        <taxon>Chlamydiales</taxon>
        <taxon>Chlamydiaceae</taxon>
        <taxon>Chlamydia/Chlamydophila group</taxon>
        <taxon>Chlamydia</taxon>
    </lineage>
</organism>
<evidence type="ECO:0000255" key="1">
    <source>
        <dbReference type="HAMAP-Rule" id="MF_00170"/>
    </source>
</evidence>
<keyword id="KW-0413">Isomerase</keyword>
<proteinExistence type="inferred from homology"/>
<comment type="function">
    <text evidence="1">Catalyzes the reversible conversion of ribose-5-phosphate to ribulose 5-phosphate.</text>
</comment>
<comment type="catalytic activity">
    <reaction evidence="1">
        <text>aldehydo-D-ribose 5-phosphate = D-ribulose 5-phosphate</text>
        <dbReference type="Rhea" id="RHEA:14657"/>
        <dbReference type="ChEBI" id="CHEBI:58121"/>
        <dbReference type="ChEBI" id="CHEBI:58273"/>
        <dbReference type="EC" id="5.3.1.6"/>
    </reaction>
</comment>
<comment type="pathway">
    <text evidence="1">Carbohydrate degradation; pentose phosphate pathway; D-ribose 5-phosphate from D-ribulose 5-phosphate (non-oxidative stage): step 1/1.</text>
</comment>
<comment type="subunit">
    <text evidence="1">Homodimer.</text>
</comment>
<comment type="similarity">
    <text evidence="1">Belongs to the ribose 5-phosphate isomerase family.</text>
</comment>
<protein>
    <recommendedName>
        <fullName evidence="1">Ribose-5-phosphate isomerase A</fullName>
        <ecNumber evidence="1">5.3.1.6</ecNumber>
    </recommendedName>
    <alternativeName>
        <fullName evidence="1">Phosphoriboisomerase A</fullName>
        <shortName evidence="1">PRI</shortName>
    </alternativeName>
</protein>
<gene>
    <name evidence="1" type="primary">rpiA</name>
    <name type="ordered locus">TC_0485</name>
</gene>
<accession>Q9PKI0</accession>
<name>RPIA_CHLMU</name>
<dbReference type="EC" id="5.3.1.6" evidence="1"/>
<dbReference type="EMBL" id="AE002160">
    <property type="protein sequence ID" value="AAF39331.1"/>
    <property type="molecule type" value="Genomic_DNA"/>
</dbReference>
<dbReference type="PIR" id="E81697">
    <property type="entry name" value="E81697"/>
</dbReference>
<dbReference type="RefSeq" id="WP_010230575.1">
    <property type="nucleotide sequence ID" value="NZ_CP063055.1"/>
</dbReference>
<dbReference type="SMR" id="Q9PKI0"/>
<dbReference type="GeneID" id="1245843"/>
<dbReference type="KEGG" id="cmu:TC_0485"/>
<dbReference type="eggNOG" id="COG0120">
    <property type="taxonomic scope" value="Bacteria"/>
</dbReference>
<dbReference type="HOGENOM" id="CLU_056590_1_0_0"/>
<dbReference type="OrthoDB" id="5870696at2"/>
<dbReference type="UniPathway" id="UPA00115">
    <property type="reaction ID" value="UER00412"/>
</dbReference>
<dbReference type="Proteomes" id="UP000000800">
    <property type="component" value="Chromosome"/>
</dbReference>
<dbReference type="GO" id="GO:0005829">
    <property type="term" value="C:cytosol"/>
    <property type="evidence" value="ECO:0007669"/>
    <property type="project" value="TreeGrafter"/>
</dbReference>
<dbReference type="GO" id="GO:0004751">
    <property type="term" value="F:ribose-5-phosphate isomerase activity"/>
    <property type="evidence" value="ECO:0007669"/>
    <property type="project" value="UniProtKB-UniRule"/>
</dbReference>
<dbReference type="GO" id="GO:0006014">
    <property type="term" value="P:D-ribose metabolic process"/>
    <property type="evidence" value="ECO:0007669"/>
    <property type="project" value="TreeGrafter"/>
</dbReference>
<dbReference type="GO" id="GO:0009052">
    <property type="term" value="P:pentose-phosphate shunt, non-oxidative branch"/>
    <property type="evidence" value="ECO:0007669"/>
    <property type="project" value="UniProtKB-UniRule"/>
</dbReference>
<dbReference type="CDD" id="cd01398">
    <property type="entry name" value="RPI_A"/>
    <property type="match status" value="1"/>
</dbReference>
<dbReference type="FunFam" id="3.40.50.1360:FF:000001">
    <property type="entry name" value="Ribose-5-phosphate isomerase A"/>
    <property type="match status" value="1"/>
</dbReference>
<dbReference type="Gene3D" id="3.30.70.260">
    <property type="match status" value="1"/>
</dbReference>
<dbReference type="Gene3D" id="3.40.50.1360">
    <property type="match status" value="1"/>
</dbReference>
<dbReference type="HAMAP" id="MF_00170">
    <property type="entry name" value="Rib_5P_isom_A"/>
    <property type="match status" value="1"/>
</dbReference>
<dbReference type="InterPro" id="IPR037171">
    <property type="entry name" value="NagB/RpiA_transferase-like"/>
</dbReference>
<dbReference type="InterPro" id="IPR020672">
    <property type="entry name" value="Ribose5P_isomerase_typA_subgr"/>
</dbReference>
<dbReference type="InterPro" id="IPR004788">
    <property type="entry name" value="Ribose5P_isomerase_type_A"/>
</dbReference>
<dbReference type="NCBIfam" id="NF001924">
    <property type="entry name" value="PRK00702.1"/>
    <property type="match status" value="1"/>
</dbReference>
<dbReference type="NCBIfam" id="TIGR00021">
    <property type="entry name" value="rpiA"/>
    <property type="match status" value="1"/>
</dbReference>
<dbReference type="PANTHER" id="PTHR11934">
    <property type="entry name" value="RIBOSE-5-PHOSPHATE ISOMERASE"/>
    <property type="match status" value="1"/>
</dbReference>
<dbReference type="PANTHER" id="PTHR11934:SF0">
    <property type="entry name" value="RIBOSE-5-PHOSPHATE ISOMERASE"/>
    <property type="match status" value="1"/>
</dbReference>
<dbReference type="Pfam" id="PF06026">
    <property type="entry name" value="Rib_5-P_isom_A"/>
    <property type="match status" value="1"/>
</dbReference>
<dbReference type="SUPFAM" id="SSF75445">
    <property type="entry name" value="D-ribose-5-phosphate isomerase (RpiA), lid domain"/>
    <property type="match status" value="1"/>
</dbReference>
<dbReference type="SUPFAM" id="SSF100950">
    <property type="entry name" value="NagB/RpiA/CoA transferase-like"/>
    <property type="match status" value="1"/>
</dbReference>
<feature type="chain" id="PRO_0000158406" description="Ribose-5-phosphate isomerase A">
    <location>
        <begin position="1"/>
        <end position="239"/>
    </location>
</feature>
<feature type="active site" description="Proton acceptor" evidence="1">
    <location>
        <position position="117"/>
    </location>
</feature>
<feature type="binding site" evidence="1">
    <location>
        <begin position="39"/>
        <end position="42"/>
    </location>
    <ligand>
        <name>substrate</name>
    </ligand>
</feature>
<feature type="binding site" evidence="1">
    <location>
        <begin position="95"/>
        <end position="98"/>
    </location>
    <ligand>
        <name>substrate</name>
    </ligand>
</feature>
<feature type="binding site" evidence="1">
    <location>
        <begin position="108"/>
        <end position="111"/>
    </location>
    <ligand>
        <name>substrate</name>
    </ligand>
</feature>
<feature type="binding site" evidence="1">
    <location>
        <position position="135"/>
    </location>
    <ligand>
        <name>substrate</name>
    </ligand>
</feature>
<reference key="1">
    <citation type="journal article" date="2000" name="Nucleic Acids Res.">
        <title>Genome sequences of Chlamydia trachomatis MoPn and Chlamydia pneumoniae AR39.</title>
        <authorList>
            <person name="Read T.D."/>
            <person name="Brunham R.C."/>
            <person name="Shen C."/>
            <person name="Gill S.R."/>
            <person name="Heidelberg J.F."/>
            <person name="White O."/>
            <person name="Hickey E.K."/>
            <person name="Peterson J.D."/>
            <person name="Utterback T.R."/>
            <person name="Berry K.J."/>
            <person name="Bass S."/>
            <person name="Linher K.D."/>
            <person name="Weidman J.F."/>
            <person name="Khouri H.M."/>
            <person name="Craven B."/>
            <person name="Bowman C."/>
            <person name="Dodson R.J."/>
            <person name="Gwinn M.L."/>
            <person name="Nelson W.C."/>
            <person name="DeBoy R.T."/>
            <person name="Kolonay J.F."/>
            <person name="McClarty G."/>
            <person name="Salzberg S.L."/>
            <person name="Eisen J.A."/>
            <person name="Fraser C.M."/>
        </authorList>
    </citation>
    <scope>NUCLEOTIDE SEQUENCE [LARGE SCALE GENOMIC DNA]</scope>
    <source>
        <strain>MoPn / Nigg</strain>
    </source>
</reference>